<organism>
    <name type="scientific">Bungarus fasciatus</name>
    <name type="common">Banded krait</name>
    <name type="synonym">Pseudoboa fasciata</name>
    <dbReference type="NCBI Taxonomy" id="8613"/>
    <lineage>
        <taxon>Eukaryota</taxon>
        <taxon>Metazoa</taxon>
        <taxon>Chordata</taxon>
        <taxon>Craniata</taxon>
        <taxon>Vertebrata</taxon>
        <taxon>Euteleostomi</taxon>
        <taxon>Lepidosauria</taxon>
        <taxon>Squamata</taxon>
        <taxon>Bifurcata</taxon>
        <taxon>Unidentata</taxon>
        <taxon>Episquamata</taxon>
        <taxon>Toxicofera</taxon>
        <taxon>Serpentes</taxon>
        <taxon>Colubroidea</taxon>
        <taxon>Elapidae</taxon>
        <taxon>Bungarinae</taxon>
        <taxon>Bungarus</taxon>
    </lineage>
</organism>
<keyword id="KW-0903">Direct protein sequencing</keyword>
<keyword id="KW-1015">Disulfide bond</keyword>
<keyword id="KW-0964">Secreted</keyword>
<proteinExistence type="evidence at protein level"/>
<sequence length="118" mass="13103">NMVQFKSMVQCTSTRPWLDYVDYGCNCDIGGTGTPLDELDRCCQTHANCYTEARKFPECAPYYKTYSYTCSGGTITCNADNDECAASVCNCDRTAALCFAGAPYNQNNFDVDLETRCQ</sequence>
<feature type="chain" id="PRO_0000161639" description="Acidic phospholipase A2 homolog">
    <location>
        <begin position="1"/>
        <end position="118"/>
    </location>
</feature>
<feature type="disulfide bond" evidence="1">
    <location>
        <begin position="11"/>
        <end position="70"/>
    </location>
</feature>
<feature type="disulfide bond" evidence="2">
    <location>
        <begin position="25"/>
        <end position="117"/>
    </location>
</feature>
<feature type="disulfide bond" evidence="2">
    <location>
        <begin position="27"/>
        <end position="43"/>
    </location>
</feature>
<feature type="disulfide bond" evidence="2">
    <location>
        <begin position="42"/>
        <end position="98"/>
    </location>
</feature>
<feature type="disulfide bond" evidence="2">
    <location>
        <begin position="49"/>
        <end position="91"/>
    </location>
</feature>
<feature type="disulfide bond" evidence="2">
    <location>
        <begin position="59"/>
        <end position="84"/>
    </location>
</feature>
<feature type="disulfide bond" evidence="2">
    <location>
        <begin position="77"/>
        <end position="89"/>
    </location>
</feature>
<accession>P29601</accession>
<dbReference type="SMR" id="P29601"/>
<dbReference type="GO" id="GO:0005576">
    <property type="term" value="C:extracellular region"/>
    <property type="evidence" value="ECO:0007669"/>
    <property type="project" value="UniProtKB-SubCell"/>
</dbReference>
<dbReference type="GO" id="GO:0005509">
    <property type="term" value="F:calcium ion binding"/>
    <property type="evidence" value="ECO:0007669"/>
    <property type="project" value="InterPro"/>
</dbReference>
<dbReference type="GO" id="GO:0047498">
    <property type="term" value="F:calcium-dependent phospholipase A2 activity"/>
    <property type="evidence" value="ECO:0007669"/>
    <property type="project" value="TreeGrafter"/>
</dbReference>
<dbReference type="GO" id="GO:0005543">
    <property type="term" value="F:phospholipid binding"/>
    <property type="evidence" value="ECO:0007669"/>
    <property type="project" value="TreeGrafter"/>
</dbReference>
<dbReference type="GO" id="GO:0005102">
    <property type="term" value="F:signaling receptor binding"/>
    <property type="evidence" value="ECO:0007669"/>
    <property type="project" value="TreeGrafter"/>
</dbReference>
<dbReference type="GO" id="GO:0050482">
    <property type="term" value="P:arachidonate secretion"/>
    <property type="evidence" value="ECO:0007669"/>
    <property type="project" value="InterPro"/>
</dbReference>
<dbReference type="GO" id="GO:0006633">
    <property type="term" value="P:fatty acid biosynthetic process"/>
    <property type="evidence" value="ECO:0007669"/>
    <property type="project" value="TreeGrafter"/>
</dbReference>
<dbReference type="GO" id="GO:0016042">
    <property type="term" value="P:lipid catabolic process"/>
    <property type="evidence" value="ECO:0007669"/>
    <property type="project" value="InterPro"/>
</dbReference>
<dbReference type="GO" id="GO:0006644">
    <property type="term" value="P:phospholipid metabolic process"/>
    <property type="evidence" value="ECO:0007669"/>
    <property type="project" value="InterPro"/>
</dbReference>
<dbReference type="GO" id="GO:0048146">
    <property type="term" value="P:positive regulation of fibroblast proliferation"/>
    <property type="evidence" value="ECO:0007669"/>
    <property type="project" value="TreeGrafter"/>
</dbReference>
<dbReference type="CDD" id="cd00125">
    <property type="entry name" value="PLA2c"/>
    <property type="match status" value="1"/>
</dbReference>
<dbReference type="FunFam" id="1.20.90.10:FF:000007">
    <property type="entry name" value="Acidic phospholipase A2"/>
    <property type="match status" value="1"/>
</dbReference>
<dbReference type="Gene3D" id="1.20.90.10">
    <property type="entry name" value="Phospholipase A2 domain"/>
    <property type="match status" value="1"/>
</dbReference>
<dbReference type="InterPro" id="IPR001211">
    <property type="entry name" value="PLipase_A2"/>
</dbReference>
<dbReference type="InterPro" id="IPR033112">
    <property type="entry name" value="PLipase_A2_Asp_AS"/>
</dbReference>
<dbReference type="InterPro" id="IPR016090">
    <property type="entry name" value="PLipase_A2_dom"/>
</dbReference>
<dbReference type="InterPro" id="IPR036444">
    <property type="entry name" value="PLipase_A2_dom_sf"/>
</dbReference>
<dbReference type="InterPro" id="IPR033113">
    <property type="entry name" value="PLipase_A2_His_AS"/>
</dbReference>
<dbReference type="PANTHER" id="PTHR11716:SF94">
    <property type="entry name" value="PHOSPHOLIPASE A2"/>
    <property type="match status" value="1"/>
</dbReference>
<dbReference type="PANTHER" id="PTHR11716">
    <property type="entry name" value="PHOSPHOLIPASE A2 FAMILY MEMBER"/>
    <property type="match status" value="1"/>
</dbReference>
<dbReference type="Pfam" id="PF00068">
    <property type="entry name" value="Phospholip_A2_1"/>
    <property type="match status" value="1"/>
</dbReference>
<dbReference type="PRINTS" id="PR00389">
    <property type="entry name" value="PHPHLIPASEA2"/>
</dbReference>
<dbReference type="SMART" id="SM00085">
    <property type="entry name" value="PA2c"/>
    <property type="match status" value="1"/>
</dbReference>
<dbReference type="SUPFAM" id="SSF48619">
    <property type="entry name" value="Phospholipase A2, PLA2"/>
    <property type="match status" value="1"/>
</dbReference>
<dbReference type="PROSITE" id="PS00119">
    <property type="entry name" value="PA2_ASP"/>
    <property type="match status" value="1"/>
</dbReference>
<dbReference type="PROSITE" id="PS00118">
    <property type="entry name" value="PA2_HIS"/>
    <property type="match status" value="1"/>
</dbReference>
<protein>
    <recommendedName>
        <fullName>Acidic phospholipase A2 homolog</fullName>
        <shortName>svPLA2 homolog</shortName>
    </recommendedName>
</protein>
<evidence type="ECO:0000250" key="1"/>
<evidence type="ECO:0000250" key="2">
    <source>
        <dbReference type="UniProtKB" id="P24605"/>
    </source>
</evidence>
<evidence type="ECO:0000269" key="3">
    <source>
    </source>
</evidence>
<evidence type="ECO:0000305" key="4"/>
<evidence type="ECO:0000305" key="5">
    <source>
    </source>
</evidence>
<comment type="function">
    <text evidence="3">Snake venom phospholipase A2 (PLA2) homolog that lacks both catalytic and neurotoxicity activities.</text>
</comment>
<comment type="subcellular location">
    <subcellularLocation>
        <location evidence="3">Secreted</location>
    </subcellularLocation>
</comment>
<comment type="tissue specificity">
    <text evidence="5">Expressed by the venom gland.</text>
</comment>
<comment type="similarity">
    <text evidence="4">Belongs to the phospholipase A2 family. Group I subfamily. A49 sub-subfamily.</text>
</comment>
<comment type="caution">
    <text evidence="4">Does not bind calcium as three of the calcium-binding ligands are lost.</text>
</comment>
<reference key="1">
    <citation type="journal article" date="1992" name="J. Biochem.">
        <title>Primary structure of an inactive mutant of phospholipase A2 in the venom of Bungarus fasciatus (banded krait).</title>
        <authorList>
            <person name="Liu C.-S."/>
            <person name="Kuo P.-Y."/>
            <person name="Chen J.-M."/>
            <person name="Chen S.-W."/>
            <person name="Chang C.-H."/>
            <person name="Tseng C.-C."/>
            <person name="Tseng M.-C."/>
            <person name="Lo T.-B."/>
        </authorList>
    </citation>
    <scope>PROTEIN SEQUENCE</scope>
    <scope>FUNCTION</scope>
    <scope>SUBCELLULAR LOCATION</scope>
    <source>
        <tissue>Venom</tissue>
    </source>
</reference>
<name>PA2HA_BUNFA</name>